<proteinExistence type="evidence at transcript level"/>
<protein>
    <recommendedName>
        <fullName evidence="4">Secreted RxLR effector protein 25</fullName>
    </recommendedName>
</protein>
<comment type="function">
    <text evidence="2">Effector that partially suppresses the tobacco programmed cell death induced by cell death-inducing proteins.</text>
</comment>
<comment type="subcellular location">
    <subcellularLocation>
        <location evidence="2">Secreted</location>
    </subcellularLocation>
    <subcellularLocation>
        <location evidence="2">Host cytoplasm</location>
    </subcellularLocation>
    <subcellularLocation>
        <location evidence="2">Host nucleus</location>
    </subcellularLocation>
</comment>
<comment type="induction">
    <text evidence="2 3">Expression is up-regulated at the earlier infection stages.</text>
</comment>
<comment type="domain">
    <text evidence="6">The RxLR-dEER motif acts to carry the protein into the host cell cytoplasm through binding to cell surface phosphatidylinositol-3-phosphate.</text>
</comment>
<comment type="similarity">
    <text evidence="5">Belongs to the RxLR effector family.</text>
</comment>
<keyword id="KW-1035">Host cytoplasm</keyword>
<keyword id="KW-1048">Host nucleus</keyword>
<keyword id="KW-0964">Secreted</keyword>
<keyword id="KW-0732">Signal</keyword>
<keyword id="KW-0843">Virulence</keyword>
<dbReference type="EMBL" id="KX010956">
    <property type="protein sequence ID" value="ANC73376.1"/>
    <property type="molecule type" value="mRNA"/>
</dbReference>
<dbReference type="SMR" id="A0A172M470"/>
<dbReference type="GO" id="GO:0005576">
    <property type="term" value="C:extracellular region"/>
    <property type="evidence" value="ECO:0007669"/>
    <property type="project" value="UniProtKB-SubCell"/>
</dbReference>
<dbReference type="GO" id="GO:0030430">
    <property type="term" value="C:host cell cytoplasm"/>
    <property type="evidence" value="ECO:0007669"/>
    <property type="project" value="UniProtKB-SubCell"/>
</dbReference>
<dbReference type="GO" id="GO:0042025">
    <property type="term" value="C:host cell nucleus"/>
    <property type="evidence" value="ECO:0007669"/>
    <property type="project" value="UniProtKB-SubCell"/>
</dbReference>
<sequence length="416" mass="48494">MRSWLLLLVGLSSYFALSTSVNRAKNSGSDFDLESRASTTNVNSILSKRKLRAPGGDTNTLKDSGKARREKKVWKLFCRVFLQLDDEKKCMFETNQVSSHQPEPRPALSFMPGPKPAHSLVPESKPVRSLMTGNAPVRSIATKLKLVLPRITETVKNPSKSQVVMLWLHKVAEFSRSEHGVNTMSYRTLYEWLSPSFSDAKLAKFFVGLREDEALRETAEKMLAYMLIKSTSTEAVGRAWLKSGEHPSRLFESMNFKEADFKDTVFLGWLKYASLYEKHYFSQSELTDYRRQLFFYRMYDYIKPMYSYEKTQGFLEYKFEGLTSIPGMQDFGQNLADIARRERKISFYLDSEFTPEALFNYLKVSDENLLTNVFQWLRYCRRYTMAYKYVPFDELEFLEEKLGEISLWIYQVYGKL</sequence>
<gene>
    <name evidence="4" type="primary">RxLR25</name>
</gene>
<feature type="signal peptide" evidence="1">
    <location>
        <begin position="1"/>
        <end position="20"/>
    </location>
</feature>
<feature type="chain" id="PRO_5007999408" description="Secreted RxLR effector protein 25">
    <location>
        <begin position="21"/>
        <end position="416"/>
    </location>
</feature>
<feature type="short sequence motif" description="RxLR-dEER" evidence="6">
    <location>
        <begin position="49"/>
        <end position="88"/>
    </location>
</feature>
<accession>A0A172M470</accession>
<reference key="1">
    <citation type="journal article" date="2016" name="Front. Microbiol.">
        <title>Studying the mechanism of Plasmopara viticola RxLR effectors on suppressing plant immunity.</title>
        <authorList>
            <person name="Xiang J."/>
            <person name="Li X."/>
            <person name="Wu J."/>
            <person name="Yin L."/>
            <person name="Zhang Y."/>
            <person name="Lu J."/>
        </authorList>
    </citation>
    <scope>NUCLEOTIDE SEQUENCE [MRNA]</scope>
    <scope>INDUCTION</scope>
    <scope>FUNCTION</scope>
    <scope>SUBCELLULAR LOCATION</scope>
    <source>
        <strain>ZJ-1-1</strain>
    </source>
</reference>
<reference key="2">
    <citation type="journal article" date="2015" name="Physiol. Mol. Plant Pathol.">
        <title>Characterization of the secretome of Plasmopara viticola by de novo transcriptome analysis.</title>
        <authorList>
            <person name="Yin L."/>
            <person name="Li X."/>
            <person name="Xiang J."/>
            <person name="Qu J."/>
            <person name="Zhang Y."/>
            <person name="Dry I.B."/>
            <person name="Lu J."/>
        </authorList>
    </citation>
    <scope>IDENTIFICATION</scope>
    <scope>INDUCTION</scope>
    <scope>DOMAIN</scope>
</reference>
<evidence type="ECO:0000255" key="1"/>
<evidence type="ECO:0000269" key="2">
    <source>
    </source>
</evidence>
<evidence type="ECO:0000269" key="3">
    <source ref="2"/>
</evidence>
<evidence type="ECO:0000303" key="4">
    <source ref="2"/>
</evidence>
<evidence type="ECO:0000305" key="5"/>
<evidence type="ECO:0000305" key="6">
    <source ref="2"/>
</evidence>
<organism>
    <name type="scientific">Plasmopara viticola</name>
    <name type="common">Downy mildew of grapevine</name>
    <name type="synonym">Botrytis viticola</name>
    <dbReference type="NCBI Taxonomy" id="143451"/>
    <lineage>
        <taxon>Eukaryota</taxon>
        <taxon>Sar</taxon>
        <taxon>Stramenopiles</taxon>
        <taxon>Oomycota</taxon>
        <taxon>Peronosporales</taxon>
        <taxon>Peronosporaceae</taxon>
        <taxon>Plasmopara</taxon>
    </lineage>
</organism>
<name>RLR25_PLAVT</name>